<proteinExistence type="inferred from homology"/>
<feature type="chain" id="PRO_0000113701" description="Serine hydroxymethyltransferase">
    <location>
        <begin position="1"/>
        <end position="417"/>
    </location>
</feature>
<feature type="binding site" evidence="1">
    <location>
        <position position="121"/>
    </location>
    <ligand>
        <name>(6S)-5,6,7,8-tetrahydrofolate</name>
        <dbReference type="ChEBI" id="CHEBI:57453"/>
    </ligand>
</feature>
<feature type="binding site" evidence="1">
    <location>
        <begin position="125"/>
        <end position="127"/>
    </location>
    <ligand>
        <name>(6S)-5,6,7,8-tetrahydrofolate</name>
        <dbReference type="ChEBI" id="CHEBI:57453"/>
    </ligand>
</feature>
<feature type="binding site" evidence="1">
    <location>
        <begin position="355"/>
        <end position="357"/>
    </location>
    <ligand>
        <name>(6S)-5,6,7,8-tetrahydrofolate</name>
        <dbReference type="ChEBI" id="CHEBI:57453"/>
    </ligand>
</feature>
<feature type="site" description="Plays an important role in substrate specificity" evidence="1">
    <location>
        <position position="228"/>
    </location>
</feature>
<feature type="modified residue" description="N6-(pyridoxal phosphate)lysine" evidence="1">
    <location>
        <position position="229"/>
    </location>
</feature>
<protein>
    <recommendedName>
        <fullName evidence="1">Serine hydroxymethyltransferase</fullName>
        <shortName evidence="1">SHMT</shortName>
        <shortName evidence="1">Serine methylase</shortName>
        <ecNumber evidence="1">2.1.2.1</ecNumber>
    </recommendedName>
</protein>
<sequence length="417" mass="44997">MFSRDVRLETYDPELAKAIAAEAGRQEDHVELIASENYCSPLVMEAQGSQLTNKYAEGYPGKRYYGGCEFVDIAEQLAIERIKQVFGADYANVQPHSGSQANQAVYLALLQPGDTILGMSLAHGGHLTHGAKVNVSGKLFNAVQYGVNEQGLIDYDEVQRLATEHKPKMVVAGFSAYSQKIDWARFRAIADSVGAYLFVDMAHIAGLVAAGVYPSPMEHAHVVTSTTHKTLRGPRGGIIVAKGASEELQKKLQSIVFPGIQGGPLMHVIAAKAVAFKEALEPAFKTYQQQVVKNAQAMANTLIARGYKIVSGGTENHLMLVDMIGRDVSGKDAEAALGKAHITVNKNSVPNDPRSPFVTSGLRLGTPAITTRGYQEQDSIDLANWIADVLDAPTDEAVLAKVRDAVTAQCKRYPVYG</sequence>
<reference key="1">
    <citation type="journal article" date="2002" name="Nature">
        <title>Comparison of the genomes of two Xanthomonas pathogens with differing host specificities.</title>
        <authorList>
            <person name="da Silva A.C.R."/>
            <person name="Ferro J.A."/>
            <person name="Reinach F.C."/>
            <person name="Farah C.S."/>
            <person name="Furlan L.R."/>
            <person name="Quaggio R.B."/>
            <person name="Monteiro-Vitorello C.B."/>
            <person name="Van Sluys M.A."/>
            <person name="Almeida N.F. Jr."/>
            <person name="Alves L.M.C."/>
            <person name="do Amaral A.M."/>
            <person name="Bertolini M.C."/>
            <person name="Camargo L.E.A."/>
            <person name="Camarotte G."/>
            <person name="Cannavan F."/>
            <person name="Cardozo J."/>
            <person name="Chambergo F."/>
            <person name="Ciapina L.P."/>
            <person name="Cicarelli R.M.B."/>
            <person name="Coutinho L.L."/>
            <person name="Cursino-Santos J.R."/>
            <person name="El-Dorry H."/>
            <person name="Faria J.B."/>
            <person name="Ferreira A.J.S."/>
            <person name="Ferreira R.C.C."/>
            <person name="Ferro M.I.T."/>
            <person name="Formighieri E.F."/>
            <person name="Franco M.C."/>
            <person name="Greggio C.C."/>
            <person name="Gruber A."/>
            <person name="Katsuyama A.M."/>
            <person name="Kishi L.T."/>
            <person name="Leite R.P."/>
            <person name="Lemos E.G.M."/>
            <person name="Lemos M.V.F."/>
            <person name="Locali E.C."/>
            <person name="Machado M.A."/>
            <person name="Madeira A.M.B.N."/>
            <person name="Martinez-Rossi N.M."/>
            <person name="Martins E.C."/>
            <person name="Meidanis J."/>
            <person name="Menck C.F.M."/>
            <person name="Miyaki C.Y."/>
            <person name="Moon D.H."/>
            <person name="Moreira L.M."/>
            <person name="Novo M.T.M."/>
            <person name="Okura V.K."/>
            <person name="Oliveira M.C."/>
            <person name="Oliveira V.R."/>
            <person name="Pereira H.A."/>
            <person name="Rossi A."/>
            <person name="Sena J.A.D."/>
            <person name="Silva C."/>
            <person name="de Souza R.F."/>
            <person name="Spinola L.A.F."/>
            <person name="Takita M.A."/>
            <person name="Tamura R.E."/>
            <person name="Teixeira E.C."/>
            <person name="Tezza R.I.D."/>
            <person name="Trindade dos Santos M."/>
            <person name="Truffi D."/>
            <person name="Tsai S.M."/>
            <person name="White F.F."/>
            <person name="Setubal J.C."/>
            <person name="Kitajima J.P."/>
        </authorList>
    </citation>
    <scope>NUCLEOTIDE SEQUENCE [LARGE SCALE GENOMIC DNA]</scope>
    <source>
        <strain>306</strain>
    </source>
</reference>
<dbReference type="EC" id="2.1.2.1" evidence="1"/>
<dbReference type="EMBL" id="AE008923">
    <property type="protein sequence ID" value="AAM35632.1"/>
    <property type="molecule type" value="Genomic_DNA"/>
</dbReference>
<dbReference type="RefSeq" id="WP_003490309.1">
    <property type="nucleotide sequence ID" value="NC_003919.1"/>
</dbReference>
<dbReference type="SMR" id="Q8PPE3"/>
<dbReference type="GeneID" id="66909940"/>
<dbReference type="KEGG" id="xac:XAC0743"/>
<dbReference type="eggNOG" id="COG0112">
    <property type="taxonomic scope" value="Bacteria"/>
</dbReference>
<dbReference type="HOGENOM" id="CLU_022477_2_1_6"/>
<dbReference type="UniPathway" id="UPA00193"/>
<dbReference type="UniPathway" id="UPA00288">
    <property type="reaction ID" value="UER01023"/>
</dbReference>
<dbReference type="Proteomes" id="UP000000576">
    <property type="component" value="Chromosome"/>
</dbReference>
<dbReference type="GO" id="GO:0005829">
    <property type="term" value="C:cytosol"/>
    <property type="evidence" value="ECO:0007669"/>
    <property type="project" value="TreeGrafter"/>
</dbReference>
<dbReference type="GO" id="GO:0004372">
    <property type="term" value="F:glycine hydroxymethyltransferase activity"/>
    <property type="evidence" value="ECO:0007669"/>
    <property type="project" value="UniProtKB-UniRule"/>
</dbReference>
<dbReference type="GO" id="GO:0030170">
    <property type="term" value="F:pyridoxal phosphate binding"/>
    <property type="evidence" value="ECO:0007669"/>
    <property type="project" value="UniProtKB-UniRule"/>
</dbReference>
<dbReference type="GO" id="GO:0019264">
    <property type="term" value="P:glycine biosynthetic process from serine"/>
    <property type="evidence" value="ECO:0007669"/>
    <property type="project" value="UniProtKB-UniRule"/>
</dbReference>
<dbReference type="GO" id="GO:0035999">
    <property type="term" value="P:tetrahydrofolate interconversion"/>
    <property type="evidence" value="ECO:0007669"/>
    <property type="project" value="UniProtKB-UniRule"/>
</dbReference>
<dbReference type="CDD" id="cd00378">
    <property type="entry name" value="SHMT"/>
    <property type="match status" value="1"/>
</dbReference>
<dbReference type="FunFam" id="3.40.640.10:FF:000001">
    <property type="entry name" value="Serine hydroxymethyltransferase"/>
    <property type="match status" value="1"/>
</dbReference>
<dbReference type="FunFam" id="3.90.1150.10:FF:000003">
    <property type="entry name" value="Serine hydroxymethyltransferase"/>
    <property type="match status" value="1"/>
</dbReference>
<dbReference type="Gene3D" id="3.90.1150.10">
    <property type="entry name" value="Aspartate Aminotransferase, domain 1"/>
    <property type="match status" value="1"/>
</dbReference>
<dbReference type="Gene3D" id="3.40.640.10">
    <property type="entry name" value="Type I PLP-dependent aspartate aminotransferase-like (Major domain)"/>
    <property type="match status" value="1"/>
</dbReference>
<dbReference type="HAMAP" id="MF_00051">
    <property type="entry name" value="SHMT"/>
    <property type="match status" value="1"/>
</dbReference>
<dbReference type="InterPro" id="IPR015424">
    <property type="entry name" value="PyrdxlP-dep_Trfase"/>
</dbReference>
<dbReference type="InterPro" id="IPR015421">
    <property type="entry name" value="PyrdxlP-dep_Trfase_major"/>
</dbReference>
<dbReference type="InterPro" id="IPR015422">
    <property type="entry name" value="PyrdxlP-dep_Trfase_small"/>
</dbReference>
<dbReference type="InterPro" id="IPR001085">
    <property type="entry name" value="Ser_HO-MeTrfase"/>
</dbReference>
<dbReference type="InterPro" id="IPR049943">
    <property type="entry name" value="Ser_HO-MeTrfase-like"/>
</dbReference>
<dbReference type="InterPro" id="IPR019798">
    <property type="entry name" value="Ser_HO-MeTrfase_PLP_BS"/>
</dbReference>
<dbReference type="InterPro" id="IPR039429">
    <property type="entry name" value="SHMT-like_dom"/>
</dbReference>
<dbReference type="NCBIfam" id="NF000586">
    <property type="entry name" value="PRK00011.1"/>
    <property type="match status" value="1"/>
</dbReference>
<dbReference type="PANTHER" id="PTHR11680">
    <property type="entry name" value="SERINE HYDROXYMETHYLTRANSFERASE"/>
    <property type="match status" value="1"/>
</dbReference>
<dbReference type="PANTHER" id="PTHR11680:SF50">
    <property type="entry name" value="SERINE HYDROXYMETHYLTRANSFERASE"/>
    <property type="match status" value="1"/>
</dbReference>
<dbReference type="Pfam" id="PF00464">
    <property type="entry name" value="SHMT"/>
    <property type="match status" value="1"/>
</dbReference>
<dbReference type="PIRSF" id="PIRSF000412">
    <property type="entry name" value="SHMT"/>
    <property type="match status" value="1"/>
</dbReference>
<dbReference type="SUPFAM" id="SSF53383">
    <property type="entry name" value="PLP-dependent transferases"/>
    <property type="match status" value="1"/>
</dbReference>
<dbReference type="PROSITE" id="PS00096">
    <property type="entry name" value="SHMT"/>
    <property type="match status" value="1"/>
</dbReference>
<keyword id="KW-0028">Amino-acid biosynthesis</keyword>
<keyword id="KW-0963">Cytoplasm</keyword>
<keyword id="KW-0554">One-carbon metabolism</keyword>
<keyword id="KW-0663">Pyridoxal phosphate</keyword>
<keyword id="KW-0808">Transferase</keyword>
<name>GLYA_XANAC</name>
<evidence type="ECO:0000255" key="1">
    <source>
        <dbReference type="HAMAP-Rule" id="MF_00051"/>
    </source>
</evidence>
<gene>
    <name evidence="1" type="primary">glyA</name>
    <name type="ordered locus">XAC0743</name>
</gene>
<organism>
    <name type="scientific">Xanthomonas axonopodis pv. citri (strain 306)</name>
    <dbReference type="NCBI Taxonomy" id="190486"/>
    <lineage>
        <taxon>Bacteria</taxon>
        <taxon>Pseudomonadati</taxon>
        <taxon>Pseudomonadota</taxon>
        <taxon>Gammaproteobacteria</taxon>
        <taxon>Lysobacterales</taxon>
        <taxon>Lysobacteraceae</taxon>
        <taxon>Xanthomonas</taxon>
    </lineage>
</organism>
<comment type="function">
    <text evidence="1">Catalyzes the reversible interconversion of serine and glycine with tetrahydrofolate (THF) serving as the one-carbon carrier. This reaction serves as the major source of one-carbon groups required for the biosynthesis of purines, thymidylate, methionine, and other important biomolecules. Also exhibits THF-independent aldolase activity toward beta-hydroxyamino acids, producing glycine and aldehydes, via a retro-aldol mechanism.</text>
</comment>
<comment type="catalytic activity">
    <reaction evidence="1">
        <text>(6R)-5,10-methylene-5,6,7,8-tetrahydrofolate + glycine + H2O = (6S)-5,6,7,8-tetrahydrofolate + L-serine</text>
        <dbReference type="Rhea" id="RHEA:15481"/>
        <dbReference type="ChEBI" id="CHEBI:15377"/>
        <dbReference type="ChEBI" id="CHEBI:15636"/>
        <dbReference type="ChEBI" id="CHEBI:33384"/>
        <dbReference type="ChEBI" id="CHEBI:57305"/>
        <dbReference type="ChEBI" id="CHEBI:57453"/>
        <dbReference type="EC" id="2.1.2.1"/>
    </reaction>
</comment>
<comment type="cofactor">
    <cofactor evidence="1">
        <name>pyridoxal 5'-phosphate</name>
        <dbReference type="ChEBI" id="CHEBI:597326"/>
    </cofactor>
</comment>
<comment type="pathway">
    <text evidence="1">One-carbon metabolism; tetrahydrofolate interconversion.</text>
</comment>
<comment type="pathway">
    <text evidence="1">Amino-acid biosynthesis; glycine biosynthesis; glycine from L-serine: step 1/1.</text>
</comment>
<comment type="subunit">
    <text evidence="1">Homodimer.</text>
</comment>
<comment type="subcellular location">
    <subcellularLocation>
        <location evidence="1">Cytoplasm</location>
    </subcellularLocation>
</comment>
<comment type="similarity">
    <text evidence="1">Belongs to the SHMT family.</text>
</comment>
<accession>Q8PPE3</accession>